<reference key="1">
    <citation type="journal article" date="1999" name="Nature">
        <title>Sequence and analysis of chromosome 4 of the plant Arabidopsis thaliana.</title>
        <authorList>
            <person name="Mayer K.F.X."/>
            <person name="Schueller C."/>
            <person name="Wambutt R."/>
            <person name="Murphy G."/>
            <person name="Volckaert G."/>
            <person name="Pohl T."/>
            <person name="Duesterhoeft A."/>
            <person name="Stiekema W."/>
            <person name="Entian K.-D."/>
            <person name="Terryn N."/>
            <person name="Harris B."/>
            <person name="Ansorge W."/>
            <person name="Brandt P."/>
            <person name="Grivell L.A."/>
            <person name="Rieger M."/>
            <person name="Weichselgartner M."/>
            <person name="de Simone V."/>
            <person name="Obermaier B."/>
            <person name="Mache R."/>
            <person name="Mueller M."/>
            <person name="Kreis M."/>
            <person name="Delseny M."/>
            <person name="Puigdomenech P."/>
            <person name="Watson M."/>
            <person name="Schmidtheini T."/>
            <person name="Reichert B."/>
            <person name="Portetelle D."/>
            <person name="Perez-Alonso M."/>
            <person name="Boutry M."/>
            <person name="Bancroft I."/>
            <person name="Vos P."/>
            <person name="Hoheisel J."/>
            <person name="Zimmermann W."/>
            <person name="Wedler H."/>
            <person name="Ridley P."/>
            <person name="Langham S.-A."/>
            <person name="McCullagh B."/>
            <person name="Bilham L."/>
            <person name="Robben J."/>
            <person name="van der Schueren J."/>
            <person name="Grymonprez B."/>
            <person name="Chuang Y.-J."/>
            <person name="Vandenbussche F."/>
            <person name="Braeken M."/>
            <person name="Weltjens I."/>
            <person name="Voet M."/>
            <person name="Bastiaens I."/>
            <person name="Aert R."/>
            <person name="Defoor E."/>
            <person name="Weitzenegger T."/>
            <person name="Bothe G."/>
            <person name="Ramsperger U."/>
            <person name="Hilbert H."/>
            <person name="Braun M."/>
            <person name="Holzer E."/>
            <person name="Brandt A."/>
            <person name="Peters S."/>
            <person name="van Staveren M."/>
            <person name="Dirkse W."/>
            <person name="Mooijman P."/>
            <person name="Klein Lankhorst R."/>
            <person name="Rose M."/>
            <person name="Hauf J."/>
            <person name="Koetter P."/>
            <person name="Berneiser S."/>
            <person name="Hempel S."/>
            <person name="Feldpausch M."/>
            <person name="Lamberth S."/>
            <person name="Van den Daele H."/>
            <person name="De Keyser A."/>
            <person name="Buysshaert C."/>
            <person name="Gielen J."/>
            <person name="Villarroel R."/>
            <person name="De Clercq R."/>
            <person name="van Montagu M."/>
            <person name="Rogers J."/>
            <person name="Cronin A."/>
            <person name="Quail M.A."/>
            <person name="Bray-Allen S."/>
            <person name="Clark L."/>
            <person name="Doggett J."/>
            <person name="Hall S."/>
            <person name="Kay M."/>
            <person name="Lennard N."/>
            <person name="McLay K."/>
            <person name="Mayes R."/>
            <person name="Pettett A."/>
            <person name="Rajandream M.A."/>
            <person name="Lyne M."/>
            <person name="Benes V."/>
            <person name="Rechmann S."/>
            <person name="Borkova D."/>
            <person name="Bloecker H."/>
            <person name="Scharfe M."/>
            <person name="Grimm M."/>
            <person name="Loehnert T.-H."/>
            <person name="Dose S."/>
            <person name="de Haan M."/>
            <person name="Maarse A.C."/>
            <person name="Schaefer M."/>
            <person name="Mueller-Auer S."/>
            <person name="Gabel C."/>
            <person name="Fuchs M."/>
            <person name="Fartmann B."/>
            <person name="Granderath K."/>
            <person name="Dauner D."/>
            <person name="Herzl A."/>
            <person name="Neumann S."/>
            <person name="Argiriou A."/>
            <person name="Vitale D."/>
            <person name="Liguori R."/>
            <person name="Piravandi E."/>
            <person name="Massenet O."/>
            <person name="Quigley F."/>
            <person name="Clabauld G."/>
            <person name="Muendlein A."/>
            <person name="Felber R."/>
            <person name="Schnabl S."/>
            <person name="Hiller R."/>
            <person name="Schmidt W."/>
            <person name="Lecharny A."/>
            <person name="Aubourg S."/>
            <person name="Chefdor F."/>
            <person name="Cooke R."/>
            <person name="Berger C."/>
            <person name="Monfort A."/>
            <person name="Casacuberta E."/>
            <person name="Gibbons T."/>
            <person name="Weber N."/>
            <person name="Vandenbol M."/>
            <person name="Bargues M."/>
            <person name="Terol J."/>
            <person name="Torres A."/>
            <person name="Perez-Perez A."/>
            <person name="Purnelle B."/>
            <person name="Bent E."/>
            <person name="Johnson S."/>
            <person name="Tacon D."/>
            <person name="Jesse T."/>
            <person name="Heijnen L."/>
            <person name="Schwarz S."/>
            <person name="Scholler P."/>
            <person name="Heber S."/>
            <person name="Francs P."/>
            <person name="Bielke C."/>
            <person name="Frishman D."/>
            <person name="Haase D."/>
            <person name="Lemcke K."/>
            <person name="Mewes H.-W."/>
            <person name="Stocker S."/>
            <person name="Zaccaria P."/>
            <person name="Bevan M."/>
            <person name="Wilson R.K."/>
            <person name="de la Bastide M."/>
            <person name="Habermann K."/>
            <person name="Parnell L."/>
            <person name="Dedhia N."/>
            <person name="Gnoj L."/>
            <person name="Schutz K."/>
            <person name="Huang E."/>
            <person name="Spiegel L."/>
            <person name="Sekhon M."/>
            <person name="Murray J."/>
            <person name="Sheet P."/>
            <person name="Cordes M."/>
            <person name="Abu-Threideh J."/>
            <person name="Stoneking T."/>
            <person name="Kalicki J."/>
            <person name="Graves T."/>
            <person name="Harmon G."/>
            <person name="Edwards J."/>
            <person name="Latreille P."/>
            <person name="Courtney L."/>
            <person name="Cloud J."/>
            <person name="Abbott A."/>
            <person name="Scott K."/>
            <person name="Johnson D."/>
            <person name="Minx P."/>
            <person name="Bentley D."/>
            <person name="Fulton B."/>
            <person name="Miller N."/>
            <person name="Greco T."/>
            <person name="Kemp K."/>
            <person name="Kramer J."/>
            <person name="Fulton L."/>
            <person name="Mardis E."/>
            <person name="Dante M."/>
            <person name="Pepin K."/>
            <person name="Hillier L.W."/>
            <person name="Nelson J."/>
            <person name="Spieth J."/>
            <person name="Ryan E."/>
            <person name="Andrews S."/>
            <person name="Geisel C."/>
            <person name="Layman D."/>
            <person name="Du H."/>
            <person name="Ali J."/>
            <person name="Berghoff A."/>
            <person name="Jones K."/>
            <person name="Drone K."/>
            <person name="Cotton M."/>
            <person name="Joshu C."/>
            <person name="Antonoiu B."/>
            <person name="Zidanic M."/>
            <person name="Strong C."/>
            <person name="Sun H."/>
            <person name="Lamar B."/>
            <person name="Yordan C."/>
            <person name="Ma P."/>
            <person name="Zhong J."/>
            <person name="Preston R."/>
            <person name="Vil D."/>
            <person name="Shekher M."/>
            <person name="Matero A."/>
            <person name="Shah R."/>
            <person name="Swaby I.K."/>
            <person name="O'Shaughnessy A."/>
            <person name="Rodriguez M."/>
            <person name="Hoffman J."/>
            <person name="Till S."/>
            <person name="Granat S."/>
            <person name="Shohdy N."/>
            <person name="Hasegawa A."/>
            <person name="Hameed A."/>
            <person name="Lodhi M."/>
            <person name="Johnson A."/>
            <person name="Chen E."/>
            <person name="Marra M.A."/>
            <person name="Martienssen R."/>
            <person name="McCombie W.R."/>
        </authorList>
    </citation>
    <scope>NUCLEOTIDE SEQUENCE [LARGE SCALE GENOMIC DNA]</scope>
    <source>
        <strain>cv. Columbia</strain>
    </source>
</reference>
<reference key="2">
    <citation type="journal article" date="2017" name="Plant J.">
        <title>Araport11: a complete reannotation of the Arabidopsis thaliana reference genome.</title>
        <authorList>
            <person name="Cheng C.Y."/>
            <person name="Krishnakumar V."/>
            <person name="Chan A.P."/>
            <person name="Thibaud-Nissen F."/>
            <person name="Schobel S."/>
            <person name="Town C.D."/>
        </authorList>
    </citation>
    <scope>GENOME REANNOTATION</scope>
    <source>
        <strain>cv. Columbia</strain>
    </source>
</reference>
<reference key="3">
    <citation type="journal article" date="2011" name="Plant Cell">
        <title>The MYB80 transcription factor is required for pollen development and the regulation of tapetal programmed cell death in Arabidopsis thaliana.</title>
        <authorList>
            <person name="Phan H.A."/>
            <person name="Iacuone S."/>
            <person name="Li S.F."/>
            <person name="Parish R.W."/>
        </authorList>
    </citation>
    <scope>FUNCTION</scope>
    <scope>DEVELOPMENTAL STAGE</scope>
    <scope>DISRUPTION PHENOTYPE</scope>
</reference>
<comment type="function">
    <text evidence="5">Probable aspartic protease activated by the transcription factor MYB80. May participate in the regulation of the timing of tapetal programmed cell death (PCD) which is critical for pollen development.</text>
</comment>
<comment type="developmental stage">
    <text evidence="5">During anther development, expressed from stage 6 to stage 9 in tapetal cells and developing microspores.</text>
</comment>
<comment type="disruption phenotype">
    <text evidence="5">Premature apoptosis-like programmed cell death (PCD) in tapetum and pollen from developing anthers, leading to collapsed pollen grains.</text>
</comment>
<comment type="miscellaneous">
    <text evidence="5">Plants silencing UND exhibit partial male sterility with reduced silique elongation and seed set. Premature apoptosis-like programmed cell death (PCD) in tapetum from developing anthers, leading to collapsed pollen grains.</text>
</comment>
<comment type="similarity">
    <text evidence="7">Belongs to the peptidase A1 family.</text>
</comment>
<proteinExistence type="evidence at transcript level"/>
<protein>
    <recommendedName>
        <fullName evidence="7">Aspartyl protease UND</fullName>
        <ecNumber evidence="7">3.4.23.-</ecNumber>
    </recommendedName>
    <alternativeName>
        <fullName evidence="6">Protein UNDEAD</fullName>
    </alternativeName>
</protein>
<dbReference type="EC" id="3.4.23.-" evidence="7"/>
<dbReference type="EMBL" id="AL079349">
    <property type="protein sequence ID" value="CAB45491.1"/>
    <property type="molecule type" value="Genomic_DNA"/>
</dbReference>
<dbReference type="EMBL" id="AL161535">
    <property type="protein sequence ID" value="CAB78334.1"/>
    <property type="molecule type" value="Genomic_DNA"/>
</dbReference>
<dbReference type="EMBL" id="CP002687">
    <property type="protein sequence ID" value="AEE83203.1"/>
    <property type="molecule type" value="Genomic_DNA"/>
</dbReference>
<dbReference type="PIR" id="T10194">
    <property type="entry name" value="T10194"/>
</dbReference>
<dbReference type="RefSeq" id="NP_193028.1">
    <property type="nucleotide sequence ID" value="NM_117361.1"/>
</dbReference>
<dbReference type="SMR" id="Q9SV77"/>
<dbReference type="STRING" id="3702.Q9SV77"/>
<dbReference type="MEROPS" id="A01.A49"/>
<dbReference type="GlyCosmos" id="Q9SV77">
    <property type="glycosylation" value="1 site, No reported glycans"/>
</dbReference>
<dbReference type="GlyGen" id="Q9SV77">
    <property type="glycosylation" value="1 site"/>
</dbReference>
<dbReference type="PaxDb" id="3702-AT4G12920.1"/>
<dbReference type="EnsemblPlants" id="AT4G12920.1">
    <property type="protein sequence ID" value="AT4G12920.1"/>
    <property type="gene ID" value="AT4G12920"/>
</dbReference>
<dbReference type="GeneID" id="826904"/>
<dbReference type="Gramene" id="AT4G12920.1">
    <property type="protein sequence ID" value="AT4G12920.1"/>
    <property type="gene ID" value="AT4G12920"/>
</dbReference>
<dbReference type="KEGG" id="ath:AT4G12920"/>
<dbReference type="Araport" id="AT4G12920"/>
<dbReference type="TAIR" id="AT4G12920">
    <property type="gene designation" value="UND"/>
</dbReference>
<dbReference type="eggNOG" id="KOG1339">
    <property type="taxonomic scope" value="Eukaryota"/>
</dbReference>
<dbReference type="HOGENOM" id="CLU_005738_8_0_1"/>
<dbReference type="InParanoid" id="Q9SV77"/>
<dbReference type="OMA" id="RSRYVLF"/>
<dbReference type="PhylomeDB" id="Q9SV77"/>
<dbReference type="PRO" id="PR:Q9SV77"/>
<dbReference type="Proteomes" id="UP000006548">
    <property type="component" value="Chromosome 4"/>
</dbReference>
<dbReference type="ExpressionAtlas" id="Q9SV77">
    <property type="expression patterns" value="differential"/>
</dbReference>
<dbReference type="GO" id="GO:0004190">
    <property type="term" value="F:aspartic-type endopeptidase activity"/>
    <property type="evidence" value="ECO:0007669"/>
    <property type="project" value="UniProtKB-KW"/>
</dbReference>
<dbReference type="GO" id="GO:0009555">
    <property type="term" value="P:pollen development"/>
    <property type="evidence" value="ECO:0000315"/>
    <property type="project" value="TAIR"/>
</dbReference>
<dbReference type="GO" id="GO:0006508">
    <property type="term" value="P:proteolysis"/>
    <property type="evidence" value="ECO:0007669"/>
    <property type="project" value="UniProtKB-KW"/>
</dbReference>
<dbReference type="GO" id="GO:0043067">
    <property type="term" value="P:regulation of programmed cell death"/>
    <property type="evidence" value="ECO:0000315"/>
    <property type="project" value="TAIR"/>
</dbReference>
<dbReference type="CDD" id="cd05476">
    <property type="entry name" value="pepsin_A_like_plant"/>
    <property type="match status" value="1"/>
</dbReference>
<dbReference type="Gene3D" id="2.40.70.10">
    <property type="entry name" value="Acid Proteases"/>
    <property type="match status" value="2"/>
</dbReference>
<dbReference type="InterPro" id="IPR034161">
    <property type="entry name" value="Pepsin-like_plant"/>
</dbReference>
<dbReference type="InterPro" id="IPR033121">
    <property type="entry name" value="PEPTIDASE_A1"/>
</dbReference>
<dbReference type="InterPro" id="IPR021109">
    <property type="entry name" value="Peptidase_aspartic_dom_sf"/>
</dbReference>
<dbReference type="InterPro" id="IPR051708">
    <property type="entry name" value="Plant_Aspart_Prot_A1"/>
</dbReference>
<dbReference type="InterPro" id="IPR032799">
    <property type="entry name" value="TAXi_C"/>
</dbReference>
<dbReference type="InterPro" id="IPR032861">
    <property type="entry name" value="TAXi_N"/>
</dbReference>
<dbReference type="PANTHER" id="PTHR47967:SF13">
    <property type="entry name" value="ASPARTYL PROTEASE UND-RELATED"/>
    <property type="match status" value="1"/>
</dbReference>
<dbReference type="PANTHER" id="PTHR47967">
    <property type="entry name" value="OS07G0603500 PROTEIN-RELATED"/>
    <property type="match status" value="1"/>
</dbReference>
<dbReference type="Pfam" id="PF14541">
    <property type="entry name" value="TAXi_C"/>
    <property type="match status" value="1"/>
</dbReference>
<dbReference type="Pfam" id="PF14543">
    <property type="entry name" value="TAXi_N"/>
    <property type="match status" value="1"/>
</dbReference>
<dbReference type="SUPFAM" id="SSF50630">
    <property type="entry name" value="Acid proteases"/>
    <property type="match status" value="1"/>
</dbReference>
<dbReference type="PROSITE" id="PS51767">
    <property type="entry name" value="PEPTIDASE_A1"/>
    <property type="match status" value="1"/>
</dbReference>
<name>UND_ARATH</name>
<accession>Q9SV77</accession>
<sequence length="389" mass="43308">MKTTMNFVFLFFLPLLINAKPKRVTLHIPLVHNGANFYDSKVVSLPLSSPHSQRGLAFMAEIHFGSPQKKQFLHMDTGSSLTWTQCFPCSDCYAQKIYPKYRPAASITYRDAMCEDSHPKSNPHFAFDPLTRICTYQQHYLDETNIKGTLAQEMITVDTHDGGFKRVHGVYFGCNTLSDGSYFTGTGILGLGVGKYSIIGEFGSKFSFCLGEISEPKASHNLILGDGANVQGHPTVINITEGHTIFQLESIIVGEEITLDDPVQVFVDTGSTLSHLSTNLYYKFVDAFDDLIGSRPLSYEPTLCYKADTIERLEKMDVGFKFDVGAELSVNIHNIFIQQGPPEIRCLAIQNNKESFSHVIIGVIAMQGYNVGYDLSAKTAYINKQDCDM</sequence>
<keyword id="KW-0064">Aspartyl protease</keyword>
<keyword id="KW-0217">Developmental protein</keyword>
<keyword id="KW-1015">Disulfide bond</keyword>
<keyword id="KW-0325">Glycoprotein</keyword>
<keyword id="KW-0378">Hydrolase</keyword>
<keyword id="KW-0645">Protease</keyword>
<keyword id="KW-1185">Reference proteome</keyword>
<keyword id="KW-0732">Signal</keyword>
<feature type="signal peptide" evidence="2">
    <location>
        <begin position="1"/>
        <end position="19"/>
    </location>
</feature>
<feature type="chain" id="PRO_5006752426" description="Aspartyl protease UND">
    <location>
        <begin position="20"/>
        <end position="389"/>
    </location>
</feature>
<feature type="domain" description="Peptidase A1" evidence="4">
    <location>
        <begin position="58"/>
        <end position="383"/>
    </location>
</feature>
<feature type="active site" evidence="4">
    <location>
        <position position="76"/>
    </location>
</feature>
<feature type="active site" evidence="4">
    <location>
        <position position="268"/>
    </location>
</feature>
<feature type="glycosylation site" description="N-linked (GlcNAc...) asparagine" evidence="3">
    <location>
        <position position="238"/>
    </location>
</feature>
<feature type="disulfide bond" evidence="1">
    <location>
        <begin position="86"/>
        <end position="92"/>
    </location>
</feature>
<feature type="disulfide bond" evidence="1">
    <location>
        <begin position="304"/>
        <end position="346"/>
    </location>
</feature>
<organism>
    <name type="scientific">Arabidopsis thaliana</name>
    <name type="common">Mouse-ear cress</name>
    <dbReference type="NCBI Taxonomy" id="3702"/>
    <lineage>
        <taxon>Eukaryota</taxon>
        <taxon>Viridiplantae</taxon>
        <taxon>Streptophyta</taxon>
        <taxon>Embryophyta</taxon>
        <taxon>Tracheophyta</taxon>
        <taxon>Spermatophyta</taxon>
        <taxon>Magnoliopsida</taxon>
        <taxon>eudicotyledons</taxon>
        <taxon>Gunneridae</taxon>
        <taxon>Pentapetalae</taxon>
        <taxon>rosids</taxon>
        <taxon>malvids</taxon>
        <taxon>Brassicales</taxon>
        <taxon>Brassicaceae</taxon>
        <taxon>Camelineae</taxon>
        <taxon>Arabidopsis</taxon>
    </lineage>
</organism>
<gene>
    <name evidence="6" type="primary">UND</name>
    <name evidence="8" type="ordered locus">At4g12920</name>
</gene>
<evidence type="ECO:0000250" key="1">
    <source>
        <dbReference type="UniProtKB" id="P42210"/>
    </source>
</evidence>
<evidence type="ECO:0000255" key="2"/>
<evidence type="ECO:0000255" key="3">
    <source>
        <dbReference type="PROSITE-ProRule" id="PRU00498"/>
    </source>
</evidence>
<evidence type="ECO:0000255" key="4">
    <source>
        <dbReference type="PROSITE-ProRule" id="PRU01103"/>
    </source>
</evidence>
<evidence type="ECO:0000269" key="5">
    <source>
    </source>
</evidence>
<evidence type="ECO:0000303" key="6">
    <source>
    </source>
</evidence>
<evidence type="ECO:0000305" key="7"/>
<evidence type="ECO:0000312" key="8">
    <source>
        <dbReference type="Araport" id="AT4G12920"/>
    </source>
</evidence>